<protein>
    <recommendedName>
        <fullName evidence="1">UDP-N-acetylenolpyruvoylglucosamine reductase</fullName>
        <ecNumber evidence="1">1.3.1.98</ecNumber>
    </recommendedName>
    <alternativeName>
        <fullName evidence="1">UDP-N-acetylmuramate dehydrogenase</fullName>
    </alternativeName>
</protein>
<accession>A8HZA5</accession>
<reference key="1">
    <citation type="submission" date="2007-04" db="EMBL/GenBank/DDBJ databases">
        <title>Complete genome sequence of the nitrogen-fixing bacterium Azorhizobium caulinodans ORS571.</title>
        <authorList>
            <person name="Lee K.B."/>
            <person name="Backer P.D."/>
            <person name="Aono T."/>
            <person name="Liu C.T."/>
            <person name="Suzuki S."/>
            <person name="Suzuki T."/>
            <person name="Kaneko T."/>
            <person name="Yamada M."/>
            <person name="Tabata S."/>
            <person name="Kupfer D.M."/>
            <person name="Najar F.Z."/>
            <person name="Wiley G.B."/>
            <person name="Roe B."/>
            <person name="Binnewies T."/>
            <person name="Ussery D."/>
            <person name="Vereecke D."/>
            <person name="Gevers D."/>
            <person name="Holsters M."/>
            <person name="Oyaizu H."/>
        </authorList>
    </citation>
    <scope>NUCLEOTIDE SEQUENCE [LARGE SCALE GENOMIC DNA]</scope>
    <source>
        <strain>ATCC 43989 / DSM 5975 / JCM 20966 / LMG 6465 / NBRC 14845 / NCIMB 13405 / ORS 571</strain>
    </source>
</reference>
<name>MURB_AZOC5</name>
<proteinExistence type="inferred from homology"/>
<keyword id="KW-0131">Cell cycle</keyword>
<keyword id="KW-0132">Cell division</keyword>
<keyword id="KW-0133">Cell shape</keyword>
<keyword id="KW-0961">Cell wall biogenesis/degradation</keyword>
<keyword id="KW-0963">Cytoplasm</keyword>
<keyword id="KW-0274">FAD</keyword>
<keyword id="KW-0285">Flavoprotein</keyword>
<keyword id="KW-0521">NADP</keyword>
<keyword id="KW-0560">Oxidoreductase</keyword>
<keyword id="KW-0573">Peptidoglycan synthesis</keyword>
<keyword id="KW-1185">Reference proteome</keyword>
<organism>
    <name type="scientific">Azorhizobium caulinodans (strain ATCC 43989 / DSM 5975 / JCM 20966 / LMG 6465 / NBRC 14845 / NCIMB 13405 / ORS 571)</name>
    <dbReference type="NCBI Taxonomy" id="438753"/>
    <lineage>
        <taxon>Bacteria</taxon>
        <taxon>Pseudomonadati</taxon>
        <taxon>Pseudomonadota</taxon>
        <taxon>Alphaproteobacteria</taxon>
        <taxon>Hyphomicrobiales</taxon>
        <taxon>Xanthobacteraceae</taxon>
        <taxon>Azorhizobium</taxon>
    </lineage>
</organism>
<comment type="function">
    <text evidence="1">Cell wall formation.</text>
</comment>
<comment type="catalytic activity">
    <reaction evidence="1">
        <text>UDP-N-acetyl-alpha-D-muramate + NADP(+) = UDP-N-acetyl-3-O-(1-carboxyvinyl)-alpha-D-glucosamine + NADPH + H(+)</text>
        <dbReference type="Rhea" id="RHEA:12248"/>
        <dbReference type="ChEBI" id="CHEBI:15378"/>
        <dbReference type="ChEBI" id="CHEBI:57783"/>
        <dbReference type="ChEBI" id="CHEBI:58349"/>
        <dbReference type="ChEBI" id="CHEBI:68483"/>
        <dbReference type="ChEBI" id="CHEBI:70757"/>
        <dbReference type="EC" id="1.3.1.98"/>
    </reaction>
</comment>
<comment type="cofactor">
    <cofactor evidence="1">
        <name>FAD</name>
        <dbReference type="ChEBI" id="CHEBI:57692"/>
    </cofactor>
</comment>
<comment type="pathway">
    <text evidence="1">Cell wall biogenesis; peptidoglycan biosynthesis.</text>
</comment>
<comment type="subcellular location">
    <subcellularLocation>
        <location evidence="1">Cytoplasm</location>
    </subcellularLocation>
</comment>
<comment type="similarity">
    <text evidence="1">Belongs to the MurB family.</text>
</comment>
<feature type="chain" id="PRO_0000332448" description="UDP-N-acetylenolpyruvoylglucosamine reductase">
    <location>
        <begin position="1"/>
        <end position="308"/>
    </location>
</feature>
<feature type="domain" description="FAD-binding PCMH-type" evidence="1">
    <location>
        <begin position="37"/>
        <end position="201"/>
    </location>
</feature>
<feature type="region of interest" description="Disordered" evidence="2">
    <location>
        <begin position="216"/>
        <end position="236"/>
    </location>
</feature>
<feature type="compositionally biased region" description="Polar residues" evidence="2">
    <location>
        <begin position="216"/>
        <end position="233"/>
    </location>
</feature>
<feature type="active site" evidence="1">
    <location>
        <position position="181"/>
    </location>
</feature>
<feature type="active site" description="Proton donor" evidence="1">
    <location>
        <position position="230"/>
    </location>
</feature>
<feature type="active site" evidence="1">
    <location>
        <position position="300"/>
    </location>
</feature>
<sequence length="308" mass="32140">MTTPAFPDLVPALAAALPELRGKLTANAPIADVTWFRVGGPAQVLFQPADEADLAYALAHLPAEIPVTVIGLGSNLIVRDGGVPGMVIRLGRGFTDIAVDGTTIVAGAGVPDVKVARAAADAGLAGLAFLRGIPGAIGGALRMNGGAYGGETKDALMSARAVDRAGRIHILSLDDMGFTYRHSAAPEDFIFTQATFRGTPGEVAEIQAEMERITSSREATQPIKSRTGGSTFKNPPGHKAWQLVDAAGCRGLVLGRAQVSEMHTNFLINLGCATAAEIEGLGEEVRRRVLETSGVTLEWEIKRIGLPA</sequence>
<evidence type="ECO:0000255" key="1">
    <source>
        <dbReference type="HAMAP-Rule" id="MF_00037"/>
    </source>
</evidence>
<evidence type="ECO:0000256" key="2">
    <source>
        <dbReference type="SAM" id="MobiDB-lite"/>
    </source>
</evidence>
<dbReference type="EC" id="1.3.1.98" evidence="1"/>
<dbReference type="EMBL" id="AP009384">
    <property type="protein sequence ID" value="BAF90558.1"/>
    <property type="molecule type" value="Genomic_DNA"/>
</dbReference>
<dbReference type="RefSeq" id="WP_012173079.1">
    <property type="nucleotide sequence ID" value="NC_009937.1"/>
</dbReference>
<dbReference type="SMR" id="A8HZA5"/>
<dbReference type="STRING" id="438753.AZC_4560"/>
<dbReference type="KEGG" id="azc:AZC_4560"/>
<dbReference type="eggNOG" id="COG0812">
    <property type="taxonomic scope" value="Bacteria"/>
</dbReference>
<dbReference type="HOGENOM" id="CLU_035304_1_0_5"/>
<dbReference type="UniPathway" id="UPA00219"/>
<dbReference type="Proteomes" id="UP000000270">
    <property type="component" value="Chromosome"/>
</dbReference>
<dbReference type="GO" id="GO:0005829">
    <property type="term" value="C:cytosol"/>
    <property type="evidence" value="ECO:0007669"/>
    <property type="project" value="TreeGrafter"/>
</dbReference>
<dbReference type="GO" id="GO:0071949">
    <property type="term" value="F:FAD binding"/>
    <property type="evidence" value="ECO:0007669"/>
    <property type="project" value="InterPro"/>
</dbReference>
<dbReference type="GO" id="GO:0008762">
    <property type="term" value="F:UDP-N-acetylmuramate dehydrogenase activity"/>
    <property type="evidence" value="ECO:0007669"/>
    <property type="project" value="UniProtKB-UniRule"/>
</dbReference>
<dbReference type="GO" id="GO:0051301">
    <property type="term" value="P:cell division"/>
    <property type="evidence" value="ECO:0007669"/>
    <property type="project" value="UniProtKB-KW"/>
</dbReference>
<dbReference type="GO" id="GO:0071555">
    <property type="term" value="P:cell wall organization"/>
    <property type="evidence" value="ECO:0007669"/>
    <property type="project" value="UniProtKB-KW"/>
</dbReference>
<dbReference type="GO" id="GO:0009252">
    <property type="term" value="P:peptidoglycan biosynthetic process"/>
    <property type="evidence" value="ECO:0007669"/>
    <property type="project" value="UniProtKB-UniRule"/>
</dbReference>
<dbReference type="GO" id="GO:0008360">
    <property type="term" value="P:regulation of cell shape"/>
    <property type="evidence" value="ECO:0007669"/>
    <property type="project" value="UniProtKB-KW"/>
</dbReference>
<dbReference type="Gene3D" id="3.30.465.10">
    <property type="match status" value="1"/>
</dbReference>
<dbReference type="Gene3D" id="3.90.78.10">
    <property type="entry name" value="UDP-N-acetylenolpyruvoylglucosamine reductase, C-terminal domain"/>
    <property type="match status" value="1"/>
</dbReference>
<dbReference type="Gene3D" id="3.30.43.10">
    <property type="entry name" value="Uridine Diphospho-n-acetylenolpyruvylglucosamine Reductase, domain 2"/>
    <property type="match status" value="1"/>
</dbReference>
<dbReference type="HAMAP" id="MF_00037">
    <property type="entry name" value="MurB"/>
    <property type="match status" value="1"/>
</dbReference>
<dbReference type="InterPro" id="IPR016166">
    <property type="entry name" value="FAD-bd_PCMH"/>
</dbReference>
<dbReference type="InterPro" id="IPR036318">
    <property type="entry name" value="FAD-bd_PCMH-like_sf"/>
</dbReference>
<dbReference type="InterPro" id="IPR016167">
    <property type="entry name" value="FAD-bd_PCMH_sub1"/>
</dbReference>
<dbReference type="InterPro" id="IPR016169">
    <property type="entry name" value="FAD-bd_PCMH_sub2"/>
</dbReference>
<dbReference type="InterPro" id="IPR003170">
    <property type="entry name" value="MurB"/>
</dbReference>
<dbReference type="InterPro" id="IPR011601">
    <property type="entry name" value="MurB_C"/>
</dbReference>
<dbReference type="InterPro" id="IPR036635">
    <property type="entry name" value="MurB_C_sf"/>
</dbReference>
<dbReference type="InterPro" id="IPR006094">
    <property type="entry name" value="Oxid_FAD_bind_N"/>
</dbReference>
<dbReference type="NCBIfam" id="TIGR00179">
    <property type="entry name" value="murB"/>
    <property type="match status" value="1"/>
</dbReference>
<dbReference type="NCBIfam" id="NF010480">
    <property type="entry name" value="PRK13905.1"/>
    <property type="match status" value="1"/>
</dbReference>
<dbReference type="PANTHER" id="PTHR21071">
    <property type="entry name" value="UDP-N-ACETYLENOLPYRUVOYLGLUCOSAMINE REDUCTASE"/>
    <property type="match status" value="1"/>
</dbReference>
<dbReference type="PANTHER" id="PTHR21071:SF4">
    <property type="entry name" value="UDP-N-ACETYLENOLPYRUVOYLGLUCOSAMINE REDUCTASE"/>
    <property type="match status" value="1"/>
</dbReference>
<dbReference type="Pfam" id="PF01565">
    <property type="entry name" value="FAD_binding_4"/>
    <property type="match status" value="1"/>
</dbReference>
<dbReference type="Pfam" id="PF02873">
    <property type="entry name" value="MurB_C"/>
    <property type="match status" value="1"/>
</dbReference>
<dbReference type="SUPFAM" id="SSF56176">
    <property type="entry name" value="FAD-binding/transporter-associated domain-like"/>
    <property type="match status" value="1"/>
</dbReference>
<dbReference type="SUPFAM" id="SSF56194">
    <property type="entry name" value="Uridine diphospho-N-Acetylenolpyruvylglucosamine reductase, MurB, C-terminal domain"/>
    <property type="match status" value="1"/>
</dbReference>
<dbReference type="PROSITE" id="PS51387">
    <property type="entry name" value="FAD_PCMH"/>
    <property type="match status" value="1"/>
</dbReference>
<gene>
    <name evidence="1" type="primary">murB</name>
    <name type="ordered locus">AZC_4560</name>
</gene>